<dbReference type="EMBL" id="AK027357">
    <property type="protein sequence ID" value="BAB55059.1"/>
    <property type="molecule type" value="mRNA"/>
</dbReference>
<dbReference type="EMBL" id="BC018708">
    <property type="protein sequence ID" value="AAH18708.1"/>
    <property type="molecule type" value="mRNA"/>
</dbReference>
<dbReference type="CCDS" id="CCDS8903.1"/>
<dbReference type="RefSeq" id="NP_001290053.1">
    <property type="nucleotide sequence ID" value="NM_001303124.2"/>
</dbReference>
<dbReference type="RefSeq" id="NP_001290054.1">
    <property type="nucleotide sequence ID" value="NM_001303125.2"/>
</dbReference>
<dbReference type="RefSeq" id="NP_116175.1">
    <property type="nucleotide sequence ID" value="NM_032786.3"/>
</dbReference>
<dbReference type="BioGRID" id="124317">
    <property type="interactions" value="211"/>
</dbReference>
<dbReference type="FunCoup" id="Q96K80">
    <property type="interactions" value="1873"/>
</dbReference>
<dbReference type="IntAct" id="Q96K80">
    <property type="interactions" value="178"/>
</dbReference>
<dbReference type="STRING" id="9606.ENSP00000257940"/>
<dbReference type="GlyGen" id="Q96K80">
    <property type="glycosylation" value="1 site, 1 O-linked glycan (1 site)"/>
</dbReference>
<dbReference type="iPTMnet" id="Q96K80"/>
<dbReference type="PhosphoSitePlus" id="Q96K80"/>
<dbReference type="BioMuta" id="ZC3H10"/>
<dbReference type="DMDM" id="74760908"/>
<dbReference type="jPOST" id="Q96K80"/>
<dbReference type="MassIVE" id="Q96K80"/>
<dbReference type="PaxDb" id="9606-ENSP00000257940"/>
<dbReference type="PeptideAtlas" id="Q96K80"/>
<dbReference type="ProteomicsDB" id="77051"/>
<dbReference type="Pumba" id="Q96K80"/>
<dbReference type="Antibodypedia" id="27922">
    <property type="antibodies" value="121 antibodies from 16 providers"/>
</dbReference>
<dbReference type="DNASU" id="84872"/>
<dbReference type="Ensembl" id="ENST00000257940.7">
    <property type="protein sequence ID" value="ENSP00000257940.2"/>
    <property type="gene ID" value="ENSG00000135482.7"/>
</dbReference>
<dbReference type="GeneID" id="84872"/>
<dbReference type="KEGG" id="hsa:84872"/>
<dbReference type="MANE-Select" id="ENST00000257940.7">
    <property type="protein sequence ID" value="ENSP00000257940.2"/>
    <property type="RefSeq nucleotide sequence ID" value="NM_032786.3"/>
    <property type="RefSeq protein sequence ID" value="NP_116175.1"/>
</dbReference>
<dbReference type="UCSC" id="uc001sjp.2">
    <property type="organism name" value="human"/>
</dbReference>
<dbReference type="AGR" id="HGNC:25893"/>
<dbReference type="CTD" id="84872"/>
<dbReference type="DisGeNET" id="84872"/>
<dbReference type="GeneCards" id="ZC3H10"/>
<dbReference type="HGNC" id="HGNC:25893">
    <property type="gene designation" value="ZC3H10"/>
</dbReference>
<dbReference type="HPA" id="ENSG00000135482">
    <property type="expression patterns" value="Low tissue specificity"/>
</dbReference>
<dbReference type="neXtProt" id="NX_Q96K80"/>
<dbReference type="OpenTargets" id="ENSG00000135482"/>
<dbReference type="PharmGKB" id="PA142670534"/>
<dbReference type="VEuPathDB" id="HostDB:ENSG00000135482"/>
<dbReference type="eggNOG" id="KOG2494">
    <property type="taxonomic scope" value="Eukaryota"/>
</dbReference>
<dbReference type="GeneTree" id="ENSGT00950000182897"/>
<dbReference type="HOGENOM" id="CLU_039343_0_0_1"/>
<dbReference type="InParanoid" id="Q96K80"/>
<dbReference type="OMA" id="MSGCLSI"/>
<dbReference type="OrthoDB" id="250836at2759"/>
<dbReference type="PAN-GO" id="Q96K80">
    <property type="GO annotations" value="4 GO annotations based on evolutionary models"/>
</dbReference>
<dbReference type="PhylomeDB" id="Q96K80"/>
<dbReference type="TreeFam" id="TF321931"/>
<dbReference type="PathwayCommons" id="Q96K80"/>
<dbReference type="SignaLink" id="Q96K80"/>
<dbReference type="BioGRID-ORCS" id="84872">
    <property type="hits" value="81 hits in 1151 CRISPR screens"/>
</dbReference>
<dbReference type="GenomeRNAi" id="84872"/>
<dbReference type="Pharos" id="Q96K80">
    <property type="development level" value="Tbio"/>
</dbReference>
<dbReference type="PRO" id="PR:Q96K80"/>
<dbReference type="Proteomes" id="UP000005640">
    <property type="component" value="Chromosome 12"/>
</dbReference>
<dbReference type="RNAct" id="Q96K80">
    <property type="molecule type" value="protein"/>
</dbReference>
<dbReference type="Bgee" id="ENSG00000135482">
    <property type="expression patterns" value="Expressed in sperm and 175 other cell types or tissues"/>
</dbReference>
<dbReference type="ExpressionAtlas" id="Q96K80">
    <property type="expression patterns" value="baseline and differential"/>
</dbReference>
<dbReference type="GO" id="GO:0005634">
    <property type="term" value="C:nucleus"/>
    <property type="evidence" value="ECO:0000314"/>
    <property type="project" value="GO_Central"/>
</dbReference>
<dbReference type="GO" id="GO:0035198">
    <property type="term" value="F:miRNA binding"/>
    <property type="evidence" value="ECO:0000314"/>
    <property type="project" value="UniProtKB"/>
</dbReference>
<dbReference type="GO" id="GO:0003723">
    <property type="term" value="F:RNA binding"/>
    <property type="evidence" value="ECO:0007005"/>
    <property type="project" value="UniProtKB"/>
</dbReference>
<dbReference type="GO" id="GO:0008270">
    <property type="term" value="F:zinc ion binding"/>
    <property type="evidence" value="ECO:0007669"/>
    <property type="project" value="UniProtKB-KW"/>
</dbReference>
<dbReference type="GO" id="GO:1903799">
    <property type="term" value="P:negative regulation of miRNA processing"/>
    <property type="evidence" value="ECO:0000314"/>
    <property type="project" value="UniProtKB"/>
</dbReference>
<dbReference type="GO" id="GO:0010608">
    <property type="term" value="P:post-transcriptional regulation of gene expression"/>
    <property type="evidence" value="ECO:0000314"/>
    <property type="project" value="UniProtKB"/>
</dbReference>
<dbReference type="GO" id="GO:0043484">
    <property type="term" value="P:regulation of RNA splicing"/>
    <property type="evidence" value="ECO:0000318"/>
    <property type="project" value="GO_Central"/>
</dbReference>
<dbReference type="FunFam" id="3.30.1370.210:FF:000003">
    <property type="entry name" value="Zinc finger CCCH domain-containing protein 10"/>
    <property type="match status" value="1"/>
</dbReference>
<dbReference type="Gene3D" id="3.30.1370.210">
    <property type="match status" value="2"/>
</dbReference>
<dbReference type="InterPro" id="IPR000571">
    <property type="entry name" value="Znf_CCCH"/>
</dbReference>
<dbReference type="PANTHER" id="PTHR12675">
    <property type="entry name" value="MUSCLEBLIND-LIKE PROTEIN"/>
    <property type="match status" value="1"/>
</dbReference>
<dbReference type="PANTHER" id="PTHR12675:SF6">
    <property type="entry name" value="ZINC FINGER CCCH DOMAIN-CONTAINING PROTEIN 10"/>
    <property type="match status" value="1"/>
</dbReference>
<dbReference type="Pfam" id="PF00642">
    <property type="entry name" value="zf-CCCH"/>
    <property type="match status" value="2"/>
</dbReference>
<dbReference type="Pfam" id="PF14608">
    <property type="entry name" value="zf-CCCH_2"/>
    <property type="match status" value="1"/>
</dbReference>
<dbReference type="SMART" id="SM00356">
    <property type="entry name" value="ZnF_C3H1"/>
    <property type="match status" value="3"/>
</dbReference>
<dbReference type="PROSITE" id="PS50103">
    <property type="entry name" value="ZF_C3H1"/>
    <property type="match status" value="3"/>
</dbReference>
<gene>
    <name type="primary">ZC3H10</name>
    <name type="synonym">ZC3HDC10</name>
</gene>
<accession>Q96K80</accession>
<evidence type="ECO:0000250" key="1">
    <source>
        <dbReference type="UniProtKB" id="Q8R205"/>
    </source>
</evidence>
<evidence type="ECO:0000255" key="2"/>
<evidence type="ECO:0000255" key="3">
    <source>
        <dbReference type="PROSITE-ProRule" id="PRU00723"/>
    </source>
</evidence>
<evidence type="ECO:0000256" key="4">
    <source>
        <dbReference type="SAM" id="MobiDB-lite"/>
    </source>
</evidence>
<evidence type="ECO:0000269" key="5">
    <source>
    </source>
</evidence>
<keyword id="KW-0175">Coiled coil</keyword>
<keyword id="KW-0479">Metal-binding</keyword>
<keyword id="KW-0488">Methylation</keyword>
<keyword id="KW-0539">Nucleus</keyword>
<keyword id="KW-1267">Proteomics identification</keyword>
<keyword id="KW-1185">Reference proteome</keyword>
<keyword id="KW-0677">Repeat</keyword>
<keyword id="KW-0694">RNA-binding</keyword>
<keyword id="KW-0862">Zinc</keyword>
<keyword id="KW-0863">Zinc-finger</keyword>
<protein>
    <recommendedName>
        <fullName>Zinc finger CCCH domain-containing protein 10</fullName>
    </recommendedName>
</protein>
<name>ZC3HA_HUMAN</name>
<feature type="chain" id="PRO_0000281145" description="Zinc finger CCCH domain-containing protein 10">
    <location>
        <begin position="1"/>
        <end position="434"/>
    </location>
</feature>
<feature type="zinc finger region" description="C3H1-type 1" evidence="3">
    <location>
        <begin position="36"/>
        <end position="63"/>
    </location>
</feature>
<feature type="zinc finger region" description="C3H1-type 2" evidence="3">
    <location>
        <begin position="73"/>
        <end position="99"/>
    </location>
</feature>
<feature type="zinc finger region" description="C3H1-type 3" evidence="3">
    <location>
        <begin position="134"/>
        <end position="161"/>
    </location>
</feature>
<feature type="region of interest" description="Disordered" evidence="4">
    <location>
        <begin position="1"/>
        <end position="37"/>
    </location>
</feature>
<feature type="region of interest" description="Disordered" evidence="4">
    <location>
        <begin position="196"/>
        <end position="217"/>
    </location>
</feature>
<feature type="region of interest" description="Disordered" evidence="4">
    <location>
        <begin position="314"/>
        <end position="362"/>
    </location>
</feature>
<feature type="coiled-coil region" evidence="2">
    <location>
        <begin position="234"/>
        <end position="280"/>
    </location>
</feature>
<feature type="compositionally biased region" description="Gly residues" evidence="4">
    <location>
        <begin position="12"/>
        <end position="35"/>
    </location>
</feature>
<feature type="compositionally biased region" description="Basic and acidic residues" evidence="4">
    <location>
        <begin position="196"/>
        <end position="207"/>
    </location>
</feature>
<feature type="compositionally biased region" description="Polar residues" evidence="4">
    <location>
        <begin position="314"/>
        <end position="330"/>
    </location>
</feature>
<feature type="compositionally biased region" description="Pro residues" evidence="4">
    <location>
        <begin position="339"/>
        <end position="358"/>
    </location>
</feature>
<feature type="modified residue" description="Omega-N-methylarginine" evidence="1">
    <location>
        <position position="185"/>
    </location>
</feature>
<feature type="modified residue" description="Omega-N-methylarginine" evidence="1">
    <location>
        <position position="186"/>
    </location>
</feature>
<feature type="mutagenesis site" description="Abolishes binding to pri-MIR143." evidence="5">
    <original>CKRGKRC</original>
    <variation>SKRGKRS</variation>
    <location>
        <begin position="50"/>
        <end position="56"/>
    </location>
</feature>
<feature type="mutagenesis site" description="Abolishes binding to pri-MIR143." evidence="5">
    <original>CSRPNC</original>
    <variation>SSRPNS</variation>
    <location>
        <begin position="87"/>
        <end position="92"/>
    </location>
</feature>
<feature type="mutagenesis site" description="Reduces binding to pri-MIR143." evidence="5">
    <original>CQRGAKC</original>
    <variation>SQRGAKS</variation>
    <location>
        <begin position="148"/>
        <end position="154"/>
    </location>
</feature>
<proteinExistence type="evidence at protein level"/>
<comment type="function">
    <text evidence="5">Specific regulator of miRNA biogenesis. Binds, via the C3H1-type zinc finger domains, to the binding motif 5'-GCAGCGC-3' on microRNA pri-MIR143 and negatively regulates the processing to mature microRNA.</text>
</comment>
<comment type="interaction">
    <interactant intactId="EBI-742550">
        <id>Q96K80</id>
    </interactant>
    <interactant intactId="EBI-11976299">
        <id>Q5BKX5-3</id>
        <label>ACTMAP</label>
    </interactant>
    <organismsDiffer>false</organismsDiffer>
    <experiments>3</experiments>
</comment>
<comment type="interaction">
    <interactant intactId="EBI-742550">
        <id>Q96K80</id>
    </interactant>
    <interactant intactId="EBI-12826295">
        <id>P19801</id>
        <label>AOC1</label>
    </interactant>
    <organismsDiffer>false</organismsDiffer>
    <experiments>3</experiments>
</comment>
<comment type="interaction">
    <interactant intactId="EBI-742550">
        <id>Q96K80</id>
    </interactant>
    <interactant intactId="EBI-743771">
        <id>Q92624</id>
        <label>APPBP2</label>
    </interactant>
    <organismsDiffer>false</organismsDiffer>
    <experiments>3</experiments>
</comment>
<comment type="interaction">
    <interactant intactId="EBI-742550">
        <id>Q96K80</id>
    </interactant>
    <interactant intactId="EBI-948603">
        <id>Q03989</id>
        <label>ARID5A</label>
    </interactant>
    <organismsDiffer>false</organismsDiffer>
    <experiments>3</experiments>
</comment>
<comment type="interaction">
    <interactant intactId="EBI-742550">
        <id>Q96K80</id>
    </interactant>
    <interactant intactId="EBI-930964">
        <id>P54253</id>
        <label>ATXN1</label>
    </interactant>
    <organismsDiffer>false</organismsDiffer>
    <experiments>7</experiments>
</comment>
<comment type="interaction">
    <interactant intactId="EBI-742550">
        <id>Q96K80</id>
    </interactant>
    <interactant intactId="EBI-11983447">
        <id>Q8N9W6-4</id>
        <label>BOLL</label>
    </interactant>
    <organismsDiffer>false</organismsDiffer>
    <experiments>3</experiments>
</comment>
<comment type="interaction">
    <interactant intactId="EBI-742550">
        <id>Q96K80</id>
    </interactant>
    <interactant intactId="EBI-12809220">
        <id>Q5SWW7</id>
        <label>C10orf55</label>
    </interactant>
    <organismsDiffer>false</organismsDiffer>
    <experiments>3</experiments>
</comment>
<comment type="interaction">
    <interactant intactId="EBI-742550">
        <id>Q96K80</id>
    </interactant>
    <interactant intactId="EBI-748171">
        <id>O43186</id>
        <label>CRX</label>
    </interactant>
    <organismsDiffer>false</organismsDiffer>
    <experiments>3</experiments>
</comment>
<comment type="interaction">
    <interactant intactId="EBI-742550">
        <id>Q96K80</id>
    </interactant>
    <interactant intactId="EBI-7875264">
        <id>O75553</id>
        <label>DAB1</label>
    </interactant>
    <organismsDiffer>false</organismsDiffer>
    <experiments>3</experiments>
</comment>
<comment type="interaction">
    <interactant intactId="EBI-742550">
        <id>Q96K80</id>
    </interactant>
    <interactant intactId="EBI-724310">
        <id>Q15038</id>
        <label>DAZAP2</label>
    </interactant>
    <organismsDiffer>false</organismsDiffer>
    <experiments>7</experiments>
</comment>
<comment type="interaction">
    <interactant intactId="EBI-742550">
        <id>Q96K80</id>
    </interactant>
    <interactant intactId="EBI-12193763">
        <id>A1KXE4-2</id>
        <label>FAM168B</label>
    </interactant>
    <organismsDiffer>false</organismsDiffer>
    <experiments>3</experiments>
</comment>
<comment type="interaction">
    <interactant intactId="EBI-742550">
        <id>Q96K80</id>
    </interactant>
    <interactant intactId="EBI-2806743">
        <id>P53539</id>
        <label>FOSB</label>
    </interactant>
    <organismsDiffer>false</organismsDiffer>
    <experiments>3</experiments>
</comment>
<comment type="interaction">
    <interactant intactId="EBI-742550">
        <id>Q96K80</id>
    </interactant>
    <interactant intactId="EBI-1759806">
        <id>O75593</id>
        <label>FOXH1</label>
    </interactant>
    <organismsDiffer>false</organismsDiffer>
    <experiments>3</experiments>
</comment>
<comment type="interaction">
    <interactant intactId="EBI-742550">
        <id>Q96K80</id>
    </interactant>
    <interactant intactId="EBI-748258">
        <id>Q5TA45</id>
        <label>INTS11</label>
    </interactant>
    <organismsDiffer>false</organismsDiffer>
    <experiments>3</experiments>
</comment>
<comment type="interaction">
    <interactant intactId="EBI-742550">
        <id>Q96K80</id>
    </interactant>
    <interactant intactId="EBI-9478422">
        <id>Q96G42</id>
        <label>KLHDC7B</label>
    </interactant>
    <organismsDiffer>false</organismsDiffer>
    <experiments>3</experiments>
</comment>
<comment type="interaction">
    <interactant intactId="EBI-742550">
        <id>Q96K80</id>
    </interactant>
    <interactant intactId="EBI-12811111">
        <id>Q8IUB9</id>
        <label>KRTAP19-1</label>
    </interactant>
    <organismsDiffer>false</organismsDiffer>
    <experiments>3</experiments>
</comment>
<comment type="interaction">
    <interactant intactId="EBI-742550">
        <id>Q96K80</id>
    </interactant>
    <interactant intactId="EBI-12111050">
        <id>Q3LI64</id>
        <label>KRTAP6-1</label>
    </interactant>
    <organismsDiffer>false</organismsDiffer>
    <experiments>3</experiments>
</comment>
<comment type="interaction">
    <interactant intactId="EBI-742550">
        <id>Q96K80</id>
    </interactant>
    <interactant intactId="EBI-11962084">
        <id>Q3LI66</id>
        <label>KRTAP6-2</label>
    </interactant>
    <organismsDiffer>false</organismsDiffer>
    <experiments>3</experiments>
</comment>
<comment type="interaction">
    <interactant intactId="EBI-742550">
        <id>Q96K80</id>
    </interactant>
    <interactant intactId="EBI-10261141">
        <id>Q8IUC2</id>
        <label>KRTAP8-1</label>
    </interactant>
    <organismsDiffer>false</organismsDiffer>
    <experiments>3</experiments>
</comment>
<comment type="interaction">
    <interactant intactId="EBI-742550">
        <id>Q96K80</id>
    </interactant>
    <interactant intactId="EBI-9088686">
        <id>Q14847-2</id>
        <label>LASP1</label>
    </interactant>
    <organismsDiffer>false</organismsDiffer>
    <experiments>3</experiments>
</comment>
<comment type="interaction">
    <interactant intactId="EBI-742550">
        <id>Q96K80</id>
    </interactant>
    <interactant intactId="EBI-6447480">
        <id>P35548</id>
        <label>MSX2</label>
    </interactant>
    <organismsDiffer>false</organismsDiffer>
    <experiments>3</experiments>
</comment>
<comment type="interaction">
    <interactant intactId="EBI-742550">
        <id>Q96K80</id>
    </interactant>
    <interactant intactId="EBI-746987">
        <id>P62166</id>
        <label>NCS1</label>
    </interactant>
    <organismsDiffer>false</organismsDiffer>
    <experiments>3</experiments>
</comment>
<comment type="interaction">
    <interactant intactId="EBI-742550">
        <id>Q96K80</id>
    </interactant>
    <interactant intactId="EBI-11061759">
        <id>P23511-2</id>
        <label>NFYA</label>
    </interactant>
    <organismsDiffer>false</organismsDiffer>
    <experiments>3</experiments>
</comment>
<comment type="interaction">
    <interactant intactId="EBI-742550">
        <id>Q96K80</id>
    </interactant>
    <interactant intactId="EBI-9087860">
        <id>P32243-2</id>
        <label>OTX2</label>
    </interactant>
    <organismsDiffer>false</organismsDiffer>
    <experiments>3</experiments>
</comment>
<comment type="interaction">
    <interactant intactId="EBI-742550">
        <id>Q96K80</id>
    </interactant>
    <interactant intactId="EBI-12813389">
        <id>Q8TDS5</id>
        <label>OXER1</label>
    </interactant>
    <organismsDiffer>false</organismsDiffer>
    <experiments>3</experiments>
</comment>
<comment type="interaction">
    <interactant intactId="EBI-742550">
        <id>Q96K80</id>
    </interactant>
    <interactant intactId="EBI-348567">
        <id>O75928-2</id>
        <label>PIAS2</label>
    </interactant>
    <organismsDiffer>false</organismsDiffer>
    <experiments>3</experiments>
</comment>
<comment type="interaction">
    <interactant intactId="EBI-742550">
        <id>Q96K80</id>
    </interactant>
    <interactant intactId="EBI-11031437">
        <id>Q13492-3</id>
        <label>PICALM</label>
    </interactant>
    <organismsDiffer>false</organismsDiffer>
    <experiments>3</experiments>
</comment>
<comment type="interaction">
    <interactant intactId="EBI-742550">
        <id>Q96K80</id>
    </interactant>
    <interactant intactId="EBI-726466">
        <id>O15496</id>
        <label>PLA2G10</label>
    </interactant>
    <organismsDiffer>false</organismsDiffer>
    <experiments>3</experiments>
</comment>
<comment type="interaction">
    <interactant intactId="EBI-742550">
        <id>Q96K80</id>
    </interactant>
    <interactant intactId="EBI-11526590">
        <id>P14859-6</id>
        <label>POU2F1</label>
    </interactant>
    <organismsDiffer>false</organismsDiffer>
    <experiments>3</experiments>
</comment>
<comment type="interaction">
    <interactant intactId="EBI-742550">
        <id>Q96K80</id>
    </interactant>
    <interactant intactId="EBI-10172814">
        <id>P86479</id>
        <label>PRR20C</label>
    </interactant>
    <organismsDiffer>false</organismsDiffer>
    <experiments>3</experiments>
</comment>
<comment type="interaction">
    <interactant intactId="EBI-742550">
        <id>Q96K80</id>
    </interactant>
    <interactant intactId="EBI-12754095">
        <id>P86480</id>
        <label>PRR20D</label>
    </interactant>
    <organismsDiffer>false</organismsDiffer>
    <experiments>3</experiments>
</comment>
<comment type="interaction">
    <interactant intactId="EBI-742550">
        <id>Q96K80</id>
    </interactant>
    <interactant intactId="EBI-2840723">
        <id>Q9H0Z9</id>
        <label>RBM38</label>
    </interactant>
    <organismsDiffer>false</organismsDiffer>
    <experiments>3</experiments>
</comment>
<comment type="interaction">
    <interactant intactId="EBI-742550">
        <id>Q96K80</id>
    </interactant>
    <interactant intactId="EBI-740322">
        <id>Q93062</id>
        <label>RBPMS</label>
    </interactant>
    <organismsDiffer>false</organismsDiffer>
    <experiments>4</experiments>
</comment>
<comment type="interaction">
    <interactant intactId="EBI-742550">
        <id>Q96K80</id>
    </interactant>
    <interactant intactId="EBI-11987469">
        <id>Q6ZRY4</id>
        <label>RBPMS2</label>
    </interactant>
    <organismsDiffer>false</organismsDiffer>
    <experiments>3</experiments>
</comment>
<comment type="interaction">
    <interactant intactId="EBI-742550">
        <id>Q96K80</id>
    </interactant>
    <interactant intactId="EBI-2340927">
        <id>P78317</id>
        <label>RNF4</label>
    </interactant>
    <organismsDiffer>false</organismsDiffer>
    <experiments>3</experiments>
</comment>
<comment type="interaction">
    <interactant intactId="EBI-742550">
        <id>Q96K80</id>
    </interactant>
    <interactant intactId="EBI-743976">
        <id>Q96LM6</id>
        <label>SPMIP9</label>
    </interactant>
    <organismsDiffer>false</organismsDiffer>
    <experiments>3</experiments>
</comment>
<comment type="interaction">
    <interactant intactId="EBI-742550">
        <id>Q96K80</id>
    </interactant>
    <interactant intactId="EBI-373258">
        <id>O75886</id>
        <label>STAM2</label>
    </interactant>
    <organismsDiffer>false</organismsDiffer>
    <experiments>3</experiments>
</comment>
<comment type="interaction">
    <interactant intactId="EBI-742550">
        <id>Q96K80</id>
    </interactant>
    <interactant intactId="EBI-752030">
        <id>Q96A09</id>
        <label>TENT5B</label>
    </interactant>
    <organismsDiffer>false</organismsDiffer>
    <experiments>3</experiments>
</comment>
<comment type="interaction">
    <interactant intactId="EBI-742550">
        <id>Q96K80</id>
    </interactant>
    <interactant intactId="EBI-10180829">
        <id>Q7KZS0</id>
        <label>UBE2I</label>
    </interactant>
    <organismsDiffer>false</organismsDiffer>
    <experiments>3</experiments>
</comment>
<comment type="subcellular location">
    <subcellularLocation>
        <location evidence="5">Nucleus</location>
    </subcellularLocation>
</comment>
<reference key="1">
    <citation type="journal article" date="2004" name="Nat. Genet.">
        <title>Complete sequencing and characterization of 21,243 full-length human cDNAs.</title>
        <authorList>
            <person name="Ota T."/>
            <person name="Suzuki Y."/>
            <person name="Nishikawa T."/>
            <person name="Otsuki T."/>
            <person name="Sugiyama T."/>
            <person name="Irie R."/>
            <person name="Wakamatsu A."/>
            <person name="Hayashi K."/>
            <person name="Sato H."/>
            <person name="Nagai K."/>
            <person name="Kimura K."/>
            <person name="Makita H."/>
            <person name="Sekine M."/>
            <person name="Obayashi M."/>
            <person name="Nishi T."/>
            <person name="Shibahara T."/>
            <person name="Tanaka T."/>
            <person name="Ishii S."/>
            <person name="Yamamoto J."/>
            <person name="Saito K."/>
            <person name="Kawai Y."/>
            <person name="Isono Y."/>
            <person name="Nakamura Y."/>
            <person name="Nagahari K."/>
            <person name="Murakami K."/>
            <person name="Yasuda T."/>
            <person name="Iwayanagi T."/>
            <person name="Wagatsuma M."/>
            <person name="Shiratori A."/>
            <person name="Sudo H."/>
            <person name="Hosoiri T."/>
            <person name="Kaku Y."/>
            <person name="Kodaira H."/>
            <person name="Kondo H."/>
            <person name="Sugawara M."/>
            <person name="Takahashi M."/>
            <person name="Kanda K."/>
            <person name="Yokoi T."/>
            <person name="Furuya T."/>
            <person name="Kikkawa E."/>
            <person name="Omura Y."/>
            <person name="Abe K."/>
            <person name="Kamihara K."/>
            <person name="Katsuta N."/>
            <person name="Sato K."/>
            <person name="Tanikawa M."/>
            <person name="Yamazaki M."/>
            <person name="Ninomiya K."/>
            <person name="Ishibashi T."/>
            <person name="Yamashita H."/>
            <person name="Murakawa K."/>
            <person name="Fujimori K."/>
            <person name="Tanai H."/>
            <person name="Kimata M."/>
            <person name="Watanabe M."/>
            <person name="Hiraoka S."/>
            <person name="Chiba Y."/>
            <person name="Ishida S."/>
            <person name="Ono Y."/>
            <person name="Takiguchi S."/>
            <person name="Watanabe S."/>
            <person name="Yosida M."/>
            <person name="Hotuta T."/>
            <person name="Kusano J."/>
            <person name="Kanehori K."/>
            <person name="Takahashi-Fujii A."/>
            <person name="Hara H."/>
            <person name="Tanase T.-O."/>
            <person name="Nomura Y."/>
            <person name="Togiya S."/>
            <person name="Komai F."/>
            <person name="Hara R."/>
            <person name="Takeuchi K."/>
            <person name="Arita M."/>
            <person name="Imose N."/>
            <person name="Musashino K."/>
            <person name="Yuuki H."/>
            <person name="Oshima A."/>
            <person name="Sasaki N."/>
            <person name="Aotsuka S."/>
            <person name="Yoshikawa Y."/>
            <person name="Matsunawa H."/>
            <person name="Ichihara T."/>
            <person name="Shiohata N."/>
            <person name="Sano S."/>
            <person name="Moriya S."/>
            <person name="Momiyama H."/>
            <person name="Satoh N."/>
            <person name="Takami S."/>
            <person name="Terashima Y."/>
            <person name="Suzuki O."/>
            <person name="Nakagawa S."/>
            <person name="Senoh A."/>
            <person name="Mizoguchi H."/>
            <person name="Goto Y."/>
            <person name="Shimizu F."/>
            <person name="Wakebe H."/>
            <person name="Hishigaki H."/>
            <person name="Watanabe T."/>
            <person name="Sugiyama A."/>
            <person name="Takemoto M."/>
            <person name="Kawakami B."/>
            <person name="Yamazaki M."/>
            <person name="Watanabe K."/>
            <person name="Kumagai A."/>
            <person name="Itakura S."/>
            <person name="Fukuzumi Y."/>
            <person name="Fujimori Y."/>
            <person name="Komiyama M."/>
            <person name="Tashiro H."/>
            <person name="Tanigami A."/>
            <person name="Fujiwara T."/>
            <person name="Ono T."/>
            <person name="Yamada K."/>
            <person name="Fujii Y."/>
            <person name="Ozaki K."/>
            <person name="Hirao M."/>
            <person name="Ohmori Y."/>
            <person name="Kawabata A."/>
            <person name="Hikiji T."/>
            <person name="Kobatake N."/>
            <person name="Inagaki H."/>
            <person name="Ikema Y."/>
            <person name="Okamoto S."/>
            <person name="Okitani R."/>
            <person name="Kawakami T."/>
            <person name="Noguchi S."/>
            <person name="Itoh T."/>
            <person name="Shigeta K."/>
            <person name="Senba T."/>
            <person name="Matsumura K."/>
            <person name="Nakajima Y."/>
            <person name="Mizuno T."/>
            <person name="Morinaga M."/>
            <person name="Sasaki M."/>
            <person name="Togashi T."/>
            <person name="Oyama M."/>
            <person name="Hata H."/>
            <person name="Watanabe M."/>
            <person name="Komatsu T."/>
            <person name="Mizushima-Sugano J."/>
            <person name="Satoh T."/>
            <person name="Shirai Y."/>
            <person name="Takahashi Y."/>
            <person name="Nakagawa K."/>
            <person name="Okumura K."/>
            <person name="Nagase T."/>
            <person name="Nomura N."/>
            <person name="Kikuchi H."/>
            <person name="Masuho Y."/>
            <person name="Yamashita R."/>
            <person name="Nakai K."/>
            <person name="Yada T."/>
            <person name="Nakamura Y."/>
            <person name="Ohara O."/>
            <person name="Isogai T."/>
            <person name="Sugano S."/>
        </authorList>
    </citation>
    <scope>NUCLEOTIDE SEQUENCE [LARGE SCALE MRNA]</scope>
</reference>
<reference key="2">
    <citation type="journal article" date="2004" name="Genome Res.">
        <title>The status, quality, and expansion of the NIH full-length cDNA project: the Mammalian Gene Collection (MGC).</title>
        <authorList>
            <consortium name="The MGC Project Team"/>
        </authorList>
    </citation>
    <scope>NUCLEOTIDE SEQUENCE [LARGE SCALE MRNA]</scope>
    <source>
        <tissue>Muscle</tissue>
    </source>
</reference>
<reference key="3">
    <citation type="journal article" date="2009" name="Anal. Chem.">
        <title>Lys-N and trypsin cover complementary parts of the phosphoproteome in a refined SCX-based approach.</title>
        <authorList>
            <person name="Gauci S."/>
            <person name="Helbig A.O."/>
            <person name="Slijper M."/>
            <person name="Krijgsveld J."/>
            <person name="Heck A.J."/>
            <person name="Mohammed S."/>
        </authorList>
    </citation>
    <scope>IDENTIFICATION BY MASS SPECTROMETRY [LARGE SCALE ANALYSIS]</scope>
</reference>
<reference key="4">
    <citation type="journal article" date="2017" name="Mol. Cell">
        <title>A Compendium of RNA-Binding Proteins that Regulate MicroRNA Biogenesis.</title>
        <authorList>
            <person name="Treiber T."/>
            <person name="Treiber N."/>
            <person name="Plessmann U."/>
            <person name="Harlander S."/>
            <person name="Daiss J.L."/>
            <person name="Eichner N."/>
            <person name="Lehmann G."/>
            <person name="Schall K."/>
            <person name="Urlaub H."/>
            <person name="Meister G."/>
        </authorList>
    </citation>
    <scope>FUNCTION</scope>
    <scope>MIRNA-BINDING</scope>
    <scope>SUBCELLULAR LOCATION</scope>
    <scope>MUTAGENESIS OF 50-CYS--CYS-56; 87-CYS--CYS-92 AND 148-CYS--CYS-154</scope>
</reference>
<sequence length="434" mass="46052">MPDRDSYANGTGSSGGGPGGGGSEEASGAGVGSGGASSDAICRDFLRNVCKRGKRCRYRHPDMSEVSNLGVSKNEFIFCHDFQNKECSRPNCRFIHGSKEDEDGYKKTGELPPRLRQKVAAGLGLSPADLPNGKEEVPICRDFLKGDCQRGAKCKFRHLQRDFEFDARGGGGTGGGSTGSVLPGRRHDLYDIYDLPDRGFEDHEPGPKRRRGGCCPPDGPHFESYEYSLAPPRGVECRLLEEENAMLRKRVEELKKQVSNLLATNEVLLEQNAQFRNQAKVITLSSTAPATEQTLAPTVGTVATFNHGIAQTHTTLSSQALQPRPVSQQELVAPAGAPAAPPTNAAPPAAPPPPPPHLTPEITPLSAALAQTIAQGMAPPPVSMAPVAVSVAPVAPVAVSMAQPLAGITMSHTTTPMVTYPIASQSMRITAMPH</sequence>
<organism>
    <name type="scientific">Homo sapiens</name>
    <name type="common">Human</name>
    <dbReference type="NCBI Taxonomy" id="9606"/>
    <lineage>
        <taxon>Eukaryota</taxon>
        <taxon>Metazoa</taxon>
        <taxon>Chordata</taxon>
        <taxon>Craniata</taxon>
        <taxon>Vertebrata</taxon>
        <taxon>Euteleostomi</taxon>
        <taxon>Mammalia</taxon>
        <taxon>Eutheria</taxon>
        <taxon>Euarchontoglires</taxon>
        <taxon>Primates</taxon>
        <taxon>Haplorrhini</taxon>
        <taxon>Catarrhini</taxon>
        <taxon>Hominidae</taxon>
        <taxon>Homo</taxon>
    </lineage>
</organism>